<name>PEPQ_PYRHO</name>
<keyword id="KW-0002">3D-structure</keyword>
<keyword id="KW-0170">Cobalt</keyword>
<keyword id="KW-0963">Cytoplasm</keyword>
<keyword id="KW-0224">Dipeptidase</keyword>
<keyword id="KW-0378">Hydrolase</keyword>
<keyword id="KW-0479">Metal-binding</keyword>
<keyword id="KW-0482">Metalloprotease</keyword>
<keyword id="KW-0645">Protease</keyword>
<accession>O58885</accession>
<gene>
    <name type="primary">pepQ</name>
    <name type="ordered locus">PH1149</name>
</gene>
<sequence>MDIMNEKVKKIIEFMDKNSIDAVLIAKNPNVYYISGASPLAGGYILITGESATLYVPELEYEMAKEESNIPVEKFKKMDEFYKALEGIKSLGIESSLPYGFIEELKKKANIKEFKKVDDVIRDMRIIKSEKEIKIIEKACEIADKAVMAAIEEITEGKKEREVAAKVEYLMKMNGAEKPAFDTIIASGYRSALPHGVASDKRIERGDLVVIDLGALYQHYNSDITRTIVVGSPNEKQKEIYEIVLEAQKKAVESAKPGITAKELDSIARNIIAEYGYGEYFNHSLGHGVGLEVHEWPRVSQYDETVLREGMVITIEPGIYIPKIGGVRIEDTILITKNGSKRLTKTERELI</sequence>
<proteinExistence type="evidence at protein level"/>
<dbReference type="EC" id="3.4.13.9"/>
<dbReference type="EMBL" id="BA000001">
    <property type="protein sequence ID" value="BAA30249.1"/>
    <property type="molecule type" value="Genomic_DNA"/>
</dbReference>
<dbReference type="PIR" id="G71056">
    <property type="entry name" value="G71056"/>
</dbReference>
<dbReference type="PDB" id="1WY2">
    <property type="method" value="X-ray"/>
    <property type="resolution" value="1.70 A"/>
    <property type="chains" value="A/B=1-351"/>
</dbReference>
<dbReference type="PDBsum" id="1WY2"/>
<dbReference type="SMR" id="O58885"/>
<dbReference type="STRING" id="70601.gene:9378110"/>
<dbReference type="MEROPS" id="M24.008"/>
<dbReference type="EnsemblBacteria" id="BAA30249">
    <property type="protein sequence ID" value="BAA30249"/>
    <property type="gene ID" value="BAA30249"/>
</dbReference>
<dbReference type="KEGG" id="pho:PH1149"/>
<dbReference type="eggNOG" id="arCOG01000">
    <property type="taxonomic scope" value="Archaea"/>
</dbReference>
<dbReference type="BRENDA" id="3.4.13.9">
    <property type="organism ID" value="5244"/>
</dbReference>
<dbReference type="EvolutionaryTrace" id="O58885"/>
<dbReference type="Proteomes" id="UP000000752">
    <property type="component" value="Chromosome"/>
</dbReference>
<dbReference type="GO" id="GO:0005737">
    <property type="term" value="C:cytoplasm"/>
    <property type="evidence" value="ECO:0007669"/>
    <property type="project" value="UniProtKB-SubCell"/>
</dbReference>
<dbReference type="GO" id="GO:0046872">
    <property type="term" value="F:metal ion binding"/>
    <property type="evidence" value="ECO:0007669"/>
    <property type="project" value="UniProtKB-KW"/>
</dbReference>
<dbReference type="GO" id="GO:0008237">
    <property type="term" value="F:metallopeptidase activity"/>
    <property type="evidence" value="ECO:0007669"/>
    <property type="project" value="UniProtKB-KW"/>
</dbReference>
<dbReference type="GO" id="GO:0102009">
    <property type="term" value="F:proline dipeptidase activity"/>
    <property type="evidence" value="ECO:0007669"/>
    <property type="project" value="UniProtKB-EC"/>
</dbReference>
<dbReference type="GO" id="GO:0006508">
    <property type="term" value="P:proteolysis"/>
    <property type="evidence" value="ECO:0007669"/>
    <property type="project" value="UniProtKB-KW"/>
</dbReference>
<dbReference type="CDD" id="cd01092">
    <property type="entry name" value="APP-like"/>
    <property type="match status" value="1"/>
</dbReference>
<dbReference type="FunFam" id="3.90.230.10:FF:000014">
    <property type="entry name" value="Aminopeptidase P family protein"/>
    <property type="match status" value="1"/>
</dbReference>
<dbReference type="Gene3D" id="3.90.230.10">
    <property type="entry name" value="Creatinase/methionine aminopeptidase superfamily"/>
    <property type="match status" value="1"/>
</dbReference>
<dbReference type="Gene3D" id="3.40.350.10">
    <property type="entry name" value="Creatinase/prolidase N-terminal domain"/>
    <property type="match status" value="1"/>
</dbReference>
<dbReference type="InterPro" id="IPR029149">
    <property type="entry name" value="Creatin/AminoP/Spt16_N"/>
</dbReference>
<dbReference type="InterPro" id="IPR036005">
    <property type="entry name" value="Creatinase/aminopeptidase-like"/>
</dbReference>
<dbReference type="InterPro" id="IPR000587">
    <property type="entry name" value="Creatinase_N"/>
</dbReference>
<dbReference type="InterPro" id="IPR000994">
    <property type="entry name" value="Pept_M24"/>
</dbReference>
<dbReference type="InterPro" id="IPR001714">
    <property type="entry name" value="Pept_M24_MAP"/>
</dbReference>
<dbReference type="InterPro" id="IPR050659">
    <property type="entry name" value="Peptidase_M24B"/>
</dbReference>
<dbReference type="InterPro" id="IPR001131">
    <property type="entry name" value="Peptidase_M24B_aminopep-P_CS"/>
</dbReference>
<dbReference type="InterPro" id="IPR053500">
    <property type="entry name" value="Prolidase_arc"/>
</dbReference>
<dbReference type="NCBIfam" id="NF040821">
    <property type="entry name" value="dipep_PepQ_Arch"/>
    <property type="match status" value="1"/>
</dbReference>
<dbReference type="PANTHER" id="PTHR46112">
    <property type="entry name" value="AMINOPEPTIDASE"/>
    <property type="match status" value="1"/>
</dbReference>
<dbReference type="PANTHER" id="PTHR46112:SF2">
    <property type="entry name" value="XAA-PRO AMINOPEPTIDASE P-RELATED"/>
    <property type="match status" value="1"/>
</dbReference>
<dbReference type="Pfam" id="PF01321">
    <property type="entry name" value="Creatinase_N"/>
    <property type="match status" value="1"/>
</dbReference>
<dbReference type="Pfam" id="PF00557">
    <property type="entry name" value="Peptidase_M24"/>
    <property type="match status" value="1"/>
</dbReference>
<dbReference type="PRINTS" id="PR00599">
    <property type="entry name" value="MAPEPTIDASE"/>
</dbReference>
<dbReference type="SUPFAM" id="SSF55920">
    <property type="entry name" value="Creatinase/aminopeptidase"/>
    <property type="match status" value="1"/>
</dbReference>
<dbReference type="SUPFAM" id="SSF53092">
    <property type="entry name" value="Creatinase/prolidase N-terminal domain"/>
    <property type="match status" value="1"/>
</dbReference>
<dbReference type="PROSITE" id="PS00491">
    <property type="entry name" value="PROLINE_PEPTIDASE"/>
    <property type="match status" value="1"/>
</dbReference>
<reference key="1">
    <citation type="journal article" date="1998" name="DNA Res.">
        <title>Complete sequence and gene organization of the genome of a hyper-thermophilic archaebacterium, Pyrococcus horikoshii OT3.</title>
        <authorList>
            <person name="Kawarabayasi Y."/>
            <person name="Sawada M."/>
            <person name="Horikawa H."/>
            <person name="Haikawa Y."/>
            <person name="Hino Y."/>
            <person name="Yamamoto S."/>
            <person name="Sekine M."/>
            <person name="Baba S."/>
            <person name="Kosugi H."/>
            <person name="Hosoyama A."/>
            <person name="Nagai Y."/>
            <person name="Sakai M."/>
            <person name="Ogura K."/>
            <person name="Otsuka R."/>
            <person name="Nakazawa H."/>
            <person name="Takamiya M."/>
            <person name="Ohfuku Y."/>
            <person name="Funahashi T."/>
            <person name="Tanaka T."/>
            <person name="Kudoh Y."/>
            <person name="Yamazaki J."/>
            <person name="Kushida N."/>
            <person name="Oguchi A."/>
            <person name="Aoki K."/>
            <person name="Yoshizawa T."/>
            <person name="Nakamura Y."/>
            <person name="Robb F.T."/>
            <person name="Horikoshi K."/>
            <person name="Masuchi Y."/>
            <person name="Shizuya H."/>
            <person name="Kikuchi H."/>
        </authorList>
    </citation>
    <scope>NUCLEOTIDE SEQUENCE [LARGE SCALE GENOMIC DNA]</scope>
    <source>
        <strain>ATCC 700860 / DSM 12428 / JCM 9974 / NBRC 100139 / OT-3</strain>
    </source>
</reference>
<reference key="2">
    <citation type="submission" date="2005-02" db="PDB data bank">
        <title>Crystal structure of the prolidase from Pyrococcus horikoshii OT3.</title>
        <authorList>
            <person name="Mizutani M."/>
            <person name="Kunishima N."/>
        </authorList>
    </citation>
    <scope>X-RAY CRYSTALLOGRAPHY (1.7 ANGSTROMS) IN COMPLEX WITH ZINC IONS</scope>
    <scope>COFACTOR</scope>
    <scope>SUBUNIT</scope>
    <source>
        <strain>ATCC 700860 / DSM 12428 / JCM 9974 / NBRC 100139 / OT-3</strain>
    </source>
</reference>
<organism>
    <name type="scientific">Pyrococcus horikoshii (strain ATCC 700860 / DSM 12428 / JCM 9974 / NBRC 100139 / OT-3)</name>
    <dbReference type="NCBI Taxonomy" id="70601"/>
    <lineage>
        <taxon>Archaea</taxon>
        <taxon>Methanobacteriati</taxon>
        <taxon>Methanobacteriota</taxon>
        <taxon>Thermococci</taxon>
        <taxon>Thermococcales</taxon>
        <taxon>Thermococcaceae</taxon>
        <taxon>Pyrococcus</taxon>
    </lineage>
</organism>
<evidence type="ECO:0000250" key="1"/>
<evidence type="ECO:0000269" key="2">
    <source ref="2"/>
</evidence>
<evidence type="ECO:0000305" key="3"/>
<evidence type="ECO:0007829" key="4">
    <source>
        <dbReference type="PDB" id="1WY2"/>
    </source>
</evidence>
<feature type="chain" id="PRO_0000185094" description="Xaa-Pro dipeptidase">
    <location>
        <begin position="1"/>
        <end position="351"/>
    </location>
</feature>
<feature type="binding site">
    <location>
        <position position="212"/>
    </location>
    <ligand>
        <name>Co(2+)</name>
        <dbReference type="ChEBI" id="CHEBI:48828"/>
        <label>2</label>
    </ligand>
</feature>
<feature type="binding site">
    <location>
        <position position="223"/>
    </location>
    <ligand>
        <name>Co(2+)</name>
        <dbReference type="ChEBI" id="CHEBI:48828"/>
        <label>1</label>
    </ligand>
</feature>
<feature type="binding site">
    <location>
        <position position="223"/>
    </location>
    <ligand>
        <name>Co(2+)</name>
        <dbReference type="ChEBI" id="CHEBI:48828"/>
        <label>2</label>
    </ligand>
</feature>
<feature type="binding site">
    <location>
        <position position="287"/>
    </location>
    <ligand>
        <name>Co(2+)</name>
        <dbReference type="ChEBI" id="CHEBI:48828"/>
        <label>1</label>
    </ligand>
</feature>
<feature type="binding site">
    <location>
        <position position="316"/>
    </location>
    <ligand>
        <name>Co(2+)</name>
        <dbReference type="ChEBI" id="CHEBI:48828"/>
        <label>1</label>
    </ligand>
</feature>
<feature type="binding site">
    <location>
        <position position="330"/>
    </location>
    <ligand>
        <name>Co(2+)</name>
        <dbReference type="ChEBI" id="CHEBI:48828"/>
        <label>1</label>
    </ligand>
</feature>
<feature type="binding site">
    <location>
        <position position="330"/>
    </location>
    <ligand>
        <name>Co(2+)</name>
        <dbReference type="ChEBI" id="CHEBI:48828"/>
        <label>2</label>
    </ligand>
</feature>
<feature type="helix" evidence="4">
    <location>
        <begin position="6"/>
        <end position="17"/>
    </location>
</feature>
<feature type="strand" evidence="4">
    <location>
        <begin position="21"/>
        <end position="25"/>
    </location>
</feature>
<feature type="helix" evidence="4">
    <location>
        <begin position="28"/>
        <end position="35"/>
    </location>
</feature>
<feature type="strand" evidence="4">
    <location>
        <begin position="44"/>
        <end position="48"/>
    </location>
</feature>
<feature type="strand" evidence="4">
    <location>
        <begin position="51"/>
        <end position="57"/>
    </location>
</feature>
<feature type="helix" evidence="4">
    <location>
        <begin position="58"/>
        <end position="67"/>
    </location>
</feature>
<feature type="strand" evidence="4">
    <location>
        <begin position="72"/>
        <end position="77"/>
    </location>
</feature>
<feature type="helix" evidence="4">
    <location>
        <begin position="78"/>
        <end position="85"/>
    </location>
</feature>
<feature type="strand" evidence="4">
    <location>
        <begin position="89"/>
        <end position="93"/>
    </location>
</feature>
<feature type="helix" evidence="4">
    <location>
        <begin position="99"/>
        <end position="108"/>
    </location>
</feature>
<feature type="strand" evidence="4">
    <location>
        <begin position="113"/>
        <end position="116"/>
    </location>
</feature>
<feature type="helix" evidence="4">
    <location>
        <begin position="118"/>
        <end position="125"/>
    </location>
</feature>
<feature type="helix" evidence="4">
    <location>
        <begin position="130"/>
        <end position="153"/>
    </location>
</feature>
<feature type="helix" evidence="4">
    <location>
        <begin position="160"/>
        <end position="173"/>
    </location>
</feature>
<feature type="strand" evidence="4">
    <location>
        <begin position="177"/>
        <end position="181"/>
    </location>
</feature>
<feature type="strand" evidence="4">
    <location>
        <begin position="184"/>
        <end position="187"/>
    </location>
</feature>
<feature type="helix" evidence="4">
    <location>
        <begin position="188"/>
        <end position="192"/>
    </location>
</feature>
<feature type="strand" evidence="4">
    <location>
        <begin position="208"/>
        <end position="213"/>
    </location>
</feature>
<feature type="strand" evidence="4">
    <location>
        <begin position="215"/>
        <end position="217"/>
    </location>
</feature>
<feature type="strand" evidence="4">
    <location>
        <begin position="224"/>
        <end position="231"/>
    </location>
</feature>
<feature type="helix" evidence="4">
    <location>
        <begin position="235"/>
        <end position="254"/>
    </location>
</feature>
<feature type="helix" evidence="4">
    <location>
        <begin position="261"/>
        <end position="274"/>
    </location>
</feature>
<feature type="helix" evidence="4">
    <location>
        <begin position="278"/>
        <end position="280"/>
    </location>
</feature>
<feature type="strand" evidence="4">
    <location>
        <begin position="285"/>
        <end position="288"/>
    </location>
</feature>
<feature type="strand" evidence="4">
    <location>
        <begin position="290"/>
        <end position="300"/>
    </location>
</feature>
<feature type="strand" evidence="4">
    <location>
        <begin position="312"/>
        <end position="315"/>
    </location>
</feature>
<feature type="strand" evidence="4">
    <location>
        <begin position="318"/>
        <end position="321"/>
    </location>
</feature>
<feature type="turn" evidence="4">
    <location>
        <begin position="322"/>
        <end position="324"/>
    </location>
</feature>
<feature type="strand" evidence="4">
    <location>
        <begin position="325"/>
        <end position="328"/>
    </location>
</feature>
<feature type="strand" evidence="4">
    <location>
        <begin position="330"/>
        <end position="336"/>
    </location>
</feature>
<feature type="strand" evidence="4">
    <location>
        <begin position="339"/>
        <end position="343"/>
    </location>
</feature>
<protein>
    <recommendedName>
        <fullName>Xaa-Pro dipeptidase</fullName>
        <shortName>X-Pro dipeptidase</shortName>
        <ecNumber>3.4.13.9</ecNumber>
    </recommendedName>
    <alternativeName>
        <fullName>Imidodipeptidase</fullName>
    </alternativeName>
    <alternativeName>
        <fullName>Proline dipeptidase</fullName>
        <shortName>Prolidase</shortName>
    </alternativeName>
</protein>
<comment type="function">
    <text evidence="1">Splits dipeptides with a prolyl in the C-terminal position and a nonpolar amino acid at the N-terminal position.</text>
</comment>
<comment type="catalytic activity">
    <reaction>
        <text>Xaa-L-Pro dipeptide + H2O = an L-alpha-amino acid + L-proline</text>
        <dbReference type="Rhea" id="RHEA:76407"/>
        <dbReference type="ChEBI" id="CHEBI:15377"/>
        <dbReference type="ChEBI" id="CHEBI:59869"/>
        <dbReference type="ChEBI" id="CHEBI:60039"/>
        <dbReference type="ChEBI" id="CHEBI:195196"/>
        <dbReference type="EC" id="3.4.13.9"/>
    </reaction>
</comment>
<comment type="cofactor">
    <cofactor evidence="2">
        <name>Co(2+)</name>
        <dbReference type="ChEBI" id="CHEBI:48828"/>
    </cofactor>
    <text evidence="2">Binds 2 cobalt ions per subunit.</text>
</comment>
<comment type="subunit">
    <text evidence="2">Homodimer.</text>
</comment>
<comment type="subcellular location">
    <subcellularLocation>
        <location evidence="1">Cytoplasm</location>
    </subcellularLocation>
</comment>
<comment type="similarity">
    <text evidence="3">Belongs to the peptidase M24B family. Archaeal-type prolidase subfamily.</text>
</comment>